<evidence type="ECO:0000250" key="1">
    <source>
        <dbReference type="UniProtKB" id="Q3TYX3"/>
    </source>
</evidence>
<evidence type="ECO:0000250" key="2">
    <source>
        <dbReference type="UniProtKB" id="Q6GMV2"/>
    </source>
</evidence>
<evidence type="ECO:0000255" key="3">
    <source>
        <dbReference type="PROSITE-ProRule" id="PRU00190"/>
    </source>
</evidence>
<evidence type="ECO:0000256" key="4">
    <source>
        <dbReference type="SAM" id="MobiDB-lite"/>
    </source>
</evidence>
<evidence type="ECO:0000269" key="5">
    <source>
    </source>
</evidence>
<evidence type="ECO:0000303" key="6">
    <source>
    </source>
</evidence>
<evidence type="ECO:0000305" key="7"/>
<proteinExistence type="evidence at transcript level"/>
<feature type="chain" id="PRO_0000453202" description="Protein-lysine N-trimethyltransferase SMYD5">
    <location>
        <begin position="1"/>
        <end position="415"/>
    </location>
</feature>
<feature type="domain" description="SET" evidence="3">
    <location>
        <begin position="20"/>
        <end position="351"/>
    </location>
</feature>
<feature type="zinc finger region" description="MYND-type">
    <location>
        <begin position="95"/>
        <end position="135"/>
    </location>
</feature>
<feature type="region of interest" description="Disordered" evidence="4">
    <location>
        <begin position="388"/>
        <end position="415"/>
    </location>
</feature>
<feature type="binding site" evidence="3">
    <location>
        <position position="350"/>
    </location>
    <ligand>
        <name>S-adenosyl-L-methionine</name>
        <dbReference type="ChEBI" id="CHEBI:59789"/>
    </ligand>
</feature>
<feature type="sequence conflict" description="In Ref. 2; AAH81479 and 3; ABI34488." evidence="7" ref="2 3">
    <original>E</original>
    <variation>D</variation>
    <location>
        <position position="327"/>
    </location>
</feature>
<keyword id="KW-0963">Cytoplasm</keyword>
<keyword id="KW-0479">Metal-binding</keyword>
<keyword id="KW-0489">Methyltransferase</keyword>
<keyword id="KW-1185">Reference proteome</keyword>
<keyword id="KW-0949">S-adenosyl-L-methionine</keyword>
<keyword id="KW-0808">Transferase</keyword>
<keyword id="KW-0862">Zinc</keyword>
<keyword id="KW-0863">Zinc-finger</keyword>
<protein>
    <recommendedName>
        <fullName evidence="7">Protein-lysine N-trimethyltransferase SMYD5</fullName>
        <ecNumber evidence="2">2.1.1.-</ecNumber>
    </recommendedName>
    <alternativeName>
        <fullName>SET and MYND domain-containing protein 5</fullName>
    </alternativeName>
    <alternativeName>
        <fullName>[histone H3]-lysine20 N-trimethyltransferase SMYD5</fullName>
        <ecNumber evidence="1">2.1.1.372</ecNumber>
    </alternativeName>
    <alternativeName>
        <fullName>[histone H4]-lysine36 N-trimethyltransferase SMYD5</fullName>
        <ecNumber evidence="1">2.1.1.359</ecNumber>
    </alternativeName>
</protein>
<accession>F1RET2</accession>
<accession>A5XCC7</accession>
<accession>Q66I88</accession>
<organism>
    <name type="scientific">Danio rerio</name>
    <name type="common">Zebrafish</name>
    <name type="synonym">Brachydanio rerio</name>
    <dbReference type="NCBI Taxonomy" id="7955"/>
    <lineage>
        <taxon>Eukaryota</taxon>
        <taxon>Metazoa</taxon>
        <taxon>Chordata</taxon>
        <taxon>Craniata</taxon>
        <taxon>Vertebrata</taxon>
        <taxon>Euteleostomi</taxon>
        <taxon>Actinopterygii</taxon>
        <taxon>Neopterygii</taxon>
        <taxon>Teleostei</taxon>
        <taxon>Ostariophysi</taxon>
        <taxon>Cypriniformes</taxon>
        <taxon>Danionidae</taxon>
        <taxon>Danioninae</taxon>
        <taxon>Danio</taxon>
    </lineage>
</organism>
<name>SMYD5_DANRE</name>
<reference key="1">
    <citation type="journal article" date="2013" name="Nature">
        <title>The zebrafish reference genome sequence and its relationship to the human genome.</title>
        <authorList>
            <person name="Howe K."/>
            <person name="Clark M.D."/>
            <person name="Torroja C.F."/>
            <person name="Torrance J."/>
            <person name="Berthelot C."/>
            <person name="Muffato M."/>
            <person name="Collins J.E."/>
            <person name="Humphray S."/>
            <person name="McLaren K."/>
            <person name="Matthews L."/>
            <person name="McLaren S."/>
            <person name="Sealy I."/>
            <person name="Caccamo M."/>
            <person name="Churcher C."/>
            <person name="Scott C."/>
            <person name="Barrett J.C."/>
            <person name="Koch R."/>
            <person name="Rauch G.J."/>
            <person name="White S."/>
            <person name="Chow W."/>
            <person name="Kilian B."/>
            <person name="Quintais L.T."/>
            <person name="Guerra-Assuncao J.A."/>
            <person name="Zhou Y."/>
            <person name="Gu Y."/>
            <person name="Yen J."/>
            <person name="Vogel J.H."/>
            <person name="Eyre T."/>
            <person name="Redmond S."/>
            <person name="Banerjee R."/>
            <person name="Chi J."/>
            <person name="Fu B."/>
            <person name="Langley E."/>
            <person name="Maguire S.F."/>
            <person name="Laird G.K."/>
            <person name="Lloyd D."/>
            <person name="Kenyon E."/>
            <person name="Donaldson S."/>
            <person name="Sehra H."/>
            <person name="Almeida-King J."/>
            <person name="Loveland J."/>
            <person name="Trevanion S."/>
            <person name="Jones M."/>
            <person name="Quail M."/>
            <person name="Willey D."/>
            <person name="Hunt A."/>
            <person name="Burton J."/>
            <person name="Sims S."/>
            <person name="McLay K."/>
            <person name="Plumb B."/>
            <person name="Davis J."/>
            <person name="Clee C."/>
            <person name="Oliver K."/>
            <person name="Clark R."/>
            <person name="Riddle C."/>
            <person name="Elliot D."/>
            <person name="Threadgold G."/>
            <person name="Harden G."/>
            <person name="Ware D."/>
            <person name="Begum S."/>
            <person name="Mortimore B."/>
            <person name="Kerry G."/>
            <person name="Heath P."/>
            <person name="Phillimore B."/>
            <person name="Tracey A."/>
            <person name="Corby N."/>
            <person name="Dunn M."/>
            <person name="Johnson C."/>
            <person name="Wood J."/>
            <person name="Clark S."/>
            <person name="Pelan S."/>
            <person name="Griffiths G."/>
            <person name="Smith M."/>
            <person name="Glithero R."/>
            <person name="Howden P."/>
            <person name="Barker N."/>
            <person name="Lloyd C."/>
            <person name="Stevens C."/>
            <person name="Harley J."/>
            <person name="Holt K."/>
            <person name="Panagiotidis G."/>
            <person name="Lovell J."/>
            <person name="Beasley H."/>
            <person name="Henderson C."/>
            <person name="Gordon D."/>
            <person name="Auger K."/>
            <person name="Wright D."/>
            <person name="Collins J."/>
            <person name="Raisen C."/>
            <person name="Dyer L."/>
            <person name="Leung K."/>
            <person name="Robertson L."/>
            <person name="Ambridge K."/>
            <person name="Leongamornlert D."/>
            <person name="McGuire S."/>
            <person name="Gilderthorp R."/>
            <person name="Griffiths C."/>
            <person name="Manthravadi D."/>
            <person name="Nichol S."/>
            <person name="Barker G."/>
            <person name="Whitehead S."/>
            <person name="Kay M."/>
            <person name="Brown J."/>
            <person name="Murnane C."/>
            <person name="Gray E."/>
            <person name="Humphries M."/>
            <person name="Sycamore N."/>
            <person name="Barker D."/>
            <person name="Saunders D."/>
            <person name="Wallis J."/>
            <person name="Babbage A."/>
            <person name="Hammond S."/>
            <person name="Mashreghi-Mohammadi M."/>
            <person name="Barr L."/>
            <person name="Martin S."/>
            <person name="Wray P."/>
            <person name="Ellington A."/>
            <person name="Matthews N."/>
            <person name="Ellwood M."/>
            <person name="Woodmansey R."/>
            <person name="Clark G."/>
            <person name="Cooper J."/>
            <person name="Tromans A."/>
            <person name="Grafham D."/>
            <person name="Skuce C."/>
            <person name="Pandian R."/>
            <person name="Andrews R."/>
            <person name="Harrison E."/>
            <person name="Kimberley A."/>
            <person name="Garnett J."/>
            <person name="Fosker N."/>
            <person name="Hall R."/>
            <person name="Garner P."/>
            <person name="Kelly D."/>
            <person name="Bird C."/>
            <person name="Palmer S."/>
            <person name="Gehring I."/>
            <person name="Berger A."/>
            <person name="Dooley C.M."/>
            <person name="Ersan-Urun Z."/>
            <person name="Eser C."/>
            <person name="Geiger H."/>
            <person name="Geisler M."/>
            <person name="Karotki L."/>
            <person name="Kirn A."/>
            <person name="Konantz J."/>
            <person name="Konantz M."/>
            <person name="Oberlander M."/>
            <person name="Rudolph-Geiger S."/>
            <person name="Teucke M."/>
            <person name="Lanz C."/>
            <person name="Raddatz G."/>
            <person name="Osoegawa K."/>
            <person name="Zhu B."/>
            <person name="Rapp A."/>
            <person name="Widaa S."/>
            <person name="Langford C."/>
            <person name="Yang F."/>
            <person name="Schuster S.C."/>
            <person name="Carter N.P."/>
            <person name="Harrow J."/>
            <person name="Ning Z."/>
            <person name="Herrero J."/>
            <person name="Searle S.M."/>
            <person name="Enright A."/>
            <person name="Geisler R."/>
            <person name="Plasterk R.H."/>
            <person name="Lee C."/>
            <person name="Westerfield M."/>
            <person name="de Jong P.J."/>
            <person name="Zon L.I."/>
            <person name="Postlethwait J.H."/>
            <person name="Nusslein-Volhard C."/>
            <person name="Hubbard T.J."/>
            <person name="Roest Crollius H."/>
            <person name="Rogers J."/>
            <person name="Stemple D.L."/>
        </authorList>
    </citation>
    <scope>NUCLEOTIDE SEQUENCE [LARGE SCALE GENOMIC DNA]</scope>
    <source>
        <strain>Tuebingen</strain>
    </source>
</reference>
<reference key="2">
    <citation type="submission" date="2004-09" db="EMBL/GenBank/DDBJ databases">
        <authorList>
            <consortium name="NIH - Zebrafish Gene Collection (ZGC) project"/>
        </authorList>
    </citation>
    <scope>NUCLEOTIDE SEQUENCE [LARGE SCALE MRNA]</scope>
    <source>
        <tissue>Ovary</tissue>
    </source>
</reference>
<reference key="3">
    <citation type="journal article" date="2008" name="PLoS ONE">
        <title>Genome-wide survey and developmental expression mapping of zebrafish SET domain-containing genes.</title>
        <authorList>
            <person name="Sun X.-J."/>
            <person name="Xu P.-F."/>
            <person name="Zhou T."/>
            <person name="Hu M."/>
            <person name="Fu C.-T."/>
            <person name="Zhang Y."/>
            <person name="Jin Y."/>
            <person name="Chen Y."/>
            <person name="Chen S.-J."/>
            <person name="Huang Q.-H."/>
            <person name="Liu T.X."/>
            <person name="Chen Z."/>
        </authorList>
    </citation>
    <scope>NUCLEOTIDE SEQUENCE [MRNA] OF 208-360</scope>
</reference>
<reference key="4">
    <citation type="journal article" date="2016" name="Sci. Rep.">
        <title>Smyd5 plays pivotal roles in both primitive and definitive hematopoiesis during zebrafish embryogenesis.</title>
        <authorList>
            <person name="Fujii T."/>
            <person name="Tsunesumi S."/>
            <person name="Sagara H."/>
            <person name="Munakata M."/>
            <person name="Hisaki Y."/>
            <person name="Sekiya T."/>
            <person name="Furukawa Y."/>
            <person name="Sakamoto K."/>
            <person name="Watanabe S."/>
        </authorList>
    </citation>
    <scope>FUNCTION</scope>
    <scope>DISRUPTION PHENOTYPE</scope>
    <scope>DEVELOPMENTAL STAGE</scope>
    <scope>TISSUE SPECIFICITY</scope>
</reference>
<dbReference type="EC" id="2.1.1.-" evidence="2"/>
<dbReference type="EC" id="2.1.1.372" evidence="1"/>
<dbReference type="EC" id="2.1.1.359" evidence="1"/>
<dbReference type="EMBL" id="CT573285">
    <property type="status" value="NOT_ANNOTATED_CDS"/>
    <property type="molecule type" value="Genomic_DNA"/>
</dbReference>
<dbReference type="EMBL" id="BC081479">
    <property type="protein sequence ID" value="AAH81479.1"/>
    <property type="molecule type" value="mRNA"/>
</dbReference>
<dbReference type="EMBL" id="DQ851817">
    <property type="protein sequence ID" value="ABI34488.1"/>
    <property type="molecule type" value="mRNA"/>
</dbReference>
<dbReference type="RefSeq" id="NP_001004614.2">
    <property type="nucleotide sequence ID" value="NM_001004614.2"/>
</dbReference>
<dbReference type="FunCoup" id="F1RET2">
    <property type="interactions" value="1363"/>
</dbReference>
<dbReference type="STRING" id="7955.ENSDARP00000016467"/>
<dbReference type="PaxDb" id="7955-ENSDARP00000016467"/>
<dbReference type="Ensembl" id="ENSDART00000021657">
    <property type="protein sequence ID" value="ENSDARP00000016467"/>
    <property type="gene ID" value="ENSDARG00000071669"/>
</dbReference>
<dbReference type="GeneID" id="447875"/>
<dbReference type="KEGG" id="dre:447875"/>
<dbReference type="AGR" id="ZFIN:ZDB-GENE-040912-39"/>
<dbReference type="CTD" id="10322"/>
<dbReference type="ZFIN" id="ZDB-GENE-040912-39">
    <property type="gene designation" value="smyd5"/>
</dbReference>
<dbReference type="eggNOG" id="KOG2084">
    <property type="taxonomic scope" value="Eukaryota"/>
</dbReference>
<dbReference type="HOGENOM" id="CLU_054216_0_0_1"/>
<dbReference type="InParanoid" id="F1RET2"/>
<dbReference type="OMA" id="LMAMYQQ"/>
<dbReference type="OrthoDB" id="438641at2759"/>
<dbReference type="PhylomeDB" id="F1RET2"/>
<dbReference type="PRO" id="PR:F1RET2"/>
<dbReference type="Proteomes" id="UP000000437">
    <property type="component" value="Chromosome 14"/>
</dbReference>
<dbReference type="Bgee" id="ENSDARG00000071669">
    <property type="expression patterns" value="Expressed in tail and 22 other cell types or tissues"/>
</dbReference>
<dbReference type="GO" id="GO:0005737">
    <property type="term" value="C:cytoplasm"/>
    <property type="evidence" value="ECO:0000250"/>
    <property type="project" value="UniProtKB"/>
</dbReference>
<dbReference type="GO" id="GO:0140955">
    <property type="term" value="F:histone H3K36 trimethyltransferase activity"/>
    <property type="evidence" value="ECO:0000250"/>
    <property type="project" value="UniProtKB"/>
</dbReference>
<dbReference type="GO" id="GO:0042799">
    <property type="term" value="F:histone H4K20 methyltransferase activity"/>
    <property type="evidence" value="ECO:0000250"/>
    <property type="project" value="UniProtKB"/>
</dbReference>
<dbReference type="GO" id="GO:0016279">
    <property type="term" value="F:protein-lysine N-methyltransferase activity"/>
    <property type="evidence" value="ECO:0000250"/>
    <property type="project" value="UniProtKB"/>
</dbReference>
<dbReference type="GO" id="GO:0008270">
    <property type="term" value="F:zinc ion binding"/>
    <property type="evidence" value="ECO:0007669"/>
    <property type="project" value="UniProtKB-KW"/>
</dbReference>
<dbReference type="GO" id="GO:0060216">
    <property type="term" value="P:definitive hemopoiesis"/>
    <property type="evidence" value="ECO:0000315"/>
    <property type="project" value="ZFIN"/>
</dbReference>
<dbReference type="GO" id="GO:0032259">
    <property type="term" value="P:methylation"/>
    <property type="evidence" value="ECO:0007669"/>
    <property type="project" value="UniProtKB-KW"/>
</dbReference>
<dbReference type="GO" id="GO:0045814">
    <property type="term" value="P:negative regulation of gene expression, epigenetic"/>
    <property type="evidence" value="ECO:0000250"/>
    <property type="project" value="UniProtKB"/>
</dbReference>
<dbReference type="GO" id="GO:0045638">
    <property type="term" value="P:negative regulation of myeloid cell differentiation"/>
    <property type="evidence" value="ECO:0000315"/>
    <property type="project" value="ZFIN"/>
</dbReference>
<dbReference type="GO" id="GO:1900249">
    <property type="term" value="P:positive regulation of cytoplasmic translational elongation"/>
    <property type="evidence" value="ECO:0000250"/>
    <property type="project" value="UniProtKB"/>
</dbReference>
<dbReference type="GO" id="GO:0060215">
    <property type="term" value="P:primitive hemopoiesis"/>
    <property type="evidence" value="ECO:0000315"/>
    <property type="project" value="ZFIN"/>
</dbReference>
<dbReference type="GO" id="GO:2000736">
    <property type="term" value="P:regulation of stem cell differentiation"/>
    <property type="evidence" value="ECO:0000250"/>
    <property type="project" value="UniProtKB"/>
</dbReference>
<dbReference type="GO" id="GO:2000035">
    <property type="term" value="P:regulation of stem cell division"/>
    <property type="evidence" value="ECO:0000250"/>
    <property type="project" value="UniProtKB"/>
</dbReference>
<dbReference type="CDD" id="cd10521">
    <property type="entry name" value="SET_SMYD5"/>
    <property type="match status" value="1"/>
</dbReference>
<dbReference type="FunFam" id="2.170.270.10:FF:000078">
    <property type="entry name" value="SMYD family member 5"/>
    <property type="match status" value="1"/>
</dbReference>
<dbReference type="Gene3D" id="1.10.220.160">
    <property type="match status" value="1"/>
</dbReference>
<dbReference type="Gene3D" id="6.10.140.2220">
    <property type="match status" value="1"/>
</dbReference>
<dbReference type="Gene3D" id="2.170.270.10">
    <property type="entry name" value="SET domain"/>
    <property type="match status" value="1"/>
</dbReference>
<dbReference type="InterPro" id="IPR001214">
    <property type="entry name" value="SET_dom"/>
</dbReference>
<dbReference type="InterPro" id="IPR046341">
    <property type="entry name" value="SET_dom_sf"/>
</dbReference>
<dbReference type="InterPro" id="IPR044422">
    <property type="entry name" value="SMYD5_SET"/>
</dbReference>
<dbReference type="InterPro" id="IPR002893">
    <property type="entry name" value="Znf_MYND"/>
</dbReference>
<dbReference type="PANTHER" id="PTHR46402:SF2">
    <property type="entry name" value="HISTONE-LYSINE N-TRIMETHYLTRANSFERASE SMYD5"/>
    <property type="match status" value="1"/>
</dbReference>
<dbReference type="PANTHER" id="PTHR46402">
    <property type="entry name" value="SET AND MYND DOMAIN-CONTAINING PROTEIN 5"/>
    <property type="match status" value="1"/>
</dbReference>
<dbReference type="Pfam" id="PF00856">
    <property type="entry name" value="SET"/>
    <property type="match status" value="1"/>
</dbReference>
<dbReference type="Pfam" id="PF01753">
    <property type="entry name" value="zf-MYND"/>
    <property type="match status" value="1"/>
</dbReference>
<dbReference type="SMART" id="SM00317">
    <property type="entry name" value="SET"/>
    <property type="match status" value="1"/>
</dbReference>
<dbReference type="SUPFAM" id="SSF144232">
    <property type="entry name" value="HIT/MYND zinc finger-like"/>
    <property type="match status" value="1"/>
</dbReference>
<dbReference type="SUPFAM" id="SSF82199">
    <property type="entry name" value="SET domain"/>
    <property type="match status" value="1"/>
</dbReference>
<dbReference type="PROSITE" id="PS50280">
    <property type="entry name" value="SET"/>
    <property type="match status" value="1"/>
</dbReference>
<gene>
    <name evidence="6" type="primary">smyd5</name>
</gene>
<comment type="function">
    <text evidence="1 2 5">Protein-lysine N-trimethyltransferase that specifically catalyzes trimethylation of 'Lys-22' of the RPL40/eL40 subunit of the 60S ribosome, thereby promoting translation elongation and protein synthesis (By similarity). May also act as a histone methyltransferase in the context of histone octamers, but not on nucleosome substrates: trimethylates 'Lys-36' of histone H3 and 'Lys-20' of histone H4 to form H3K36me3 and H4K20me3, respectively (By similarity). The histone methyltransferase activity, which is independent of its SET domain, is however unsure in vivo (By similarity). Plays a crucial role in hematopoiesis during embryogenesis by negatively regulating expression of genes related to both primitive and definitive hematopoiesis (PubMed:27377701).</text>
</comment>
<comment type="catalytic activity">
    <reaction evidence="2">
        <text>L-lysyl-[protein] + 3 S-adenosyl-L-methionine = N(6),N(6),N(6)-trimethyl-L-lysyl-[protein] + 3 S-adenosyl-L-homocysteine + 3 H(+)</text>
        <dbReference type="Rhea" id="RHEA:54192"/>
        <dbReference type="Rhea" id="RHEA-COMP:9752"/>
        <dbReference type="Rhea" id="RHEA-COMP:13826"/>
        <dbReference type="ChEBI" id="CHEBI:15378"/>
        <dbReference type="ChEBI" id="CHEBI:29969"/>
        <dbReference type="ChEBI" id="CHEBI:57856"/>
        <dbReference type="ChEBI" id="CHEBI:59789"/>
        <dbReference type="ChEBI" id="CHEBI:61961"/>
    </reaction>
    <physiologicalReaction direction="left-to-right" evidence="2">
        <dbReference type="Rhea" id="RHEA:54193"/>
    </physiologicalReaction>
</comment>
<comment type="catalytic activity">
    <reaction evidence="1">
        <text>L-lysyl(20)-[histone H4] + 3 S-adenosyl-L-methionine = N(6),N(6),N(6)-trimethyl-L-lysyl(20)-[histone H4] + 3 S-adenosyl-L-homocysteine + 3 H(+)</text>
        <dbReference type="Rhea" id="RHEA:64456"/>
        <dbReference type="Rhea" id="RHEA-COMP:15554"/>
        <dbReference type="Rhea" id="RHEA-COMP:15998"/>
        <dbReference type="ChEBI" id="CHEBI:15378"/>
        <dbReference type="ChEBI" id="CHEBI:29969"/>
        <dbReference type="ChEBI" id="CHEBI:57856"/>
        <dbReference type="ChEBI" id="CHEBI:59789"/>
        <dbReference type="ChEBI" id="CHEBI:61961"/>
        <dbReference type="EC" id="2.1.1.372"/>
    </reaction>
</comment>
<comment type="catalytic activity">
    <reaction evidence="1">
        <text>L-lysyl(36)-[histone H3] + 3 S-adenosyl-L-methionine = N(6),N(6),N(6)-trimethyl-L-lysyl(36)-[histone H3] + 3 S-adenosyl-L-homocysteine + 3 H(+)</text>
        <dbReference type="Rhea" id="RHEA:60324"/>
        <dbReference type="Rhea" id="RHEA-COMP:9785"/>
        <dbReference type="Rhea" id="RHEA-COMP:15536"/>
        <dbReference type="ChEBI" id="CHEBI:15378"/>
        <dbReference type="ChEBI" id="CHEBI:29969"/>
        <dbReference type="ChEBI" id="CHEBI:57856"/>
        <dbReference type="ChEBI" id="CHEBI:59789"/>
        <dbReference type="ChEBI" id="CHEBI:61961"/>
        <dbReference type="EC" id="2.1.1.359"/>
    </reaction>
</comment>
<comment type="subcellular location">
    <subcellularLocation>
        <location evidence="2">Cytoplasm</location>
    </subcellularLocation>
</comment>
<comment type="tissue specificity">
    <text evidence="5">Expressed at high levels in the ovary and at lower levels in the fin, testis and brain.</text>
</comment>
<comment type="developmental stage">
    <text evidence="5">Abundantly expressed at early developmental stages but decreases slightly when embryos proceed in development (PubMed:27377701). Expression is strongly detected from 0.25 to 3 hours post-fertilization (hpf) in embryos, but it is only weakly observed at 12 hpf (PubMed:27377701). At 24 and 36 hpf, signals are observed only around the eye with stronger intensities at 24 hpf than 36 hpf (PubMed:27377701).</text>
</comment>
<comment type="disruption phenotype">
    <text evidence="5">Morpholino knockdown results in embryos which show normal gross morphological development, including of heart and skeletal muscle (PubMed:27377701). However, an increased expression of genes related to both primitive and definitive hematopoiesis is seen (PubMed:27377701).</text>
</comment>
<comment type="similarity">
    <text evidence="3">Belongs to the class V-like SAM-binding methyltransferase superfamily.</text>
</comment>
<sequence length="415" mass="47175">MAAPVDDMFSRCVDSAKASNCVDVRFINNVKGKGLFAKKPFKKGDTIFIERPLVSSQFLWNALYKYRACEYCLRALETAEENARRLSGLPALILPHPELCKVRPDRHQACPQCQVMYCSSECRQAAMDQYHKILCLGPSNDDPDHPVNKLQDAWRSVHFPPETSSVMILAKMVATIKQTQDKERWQRLFTNFCSRTANEEEEIVHKLLGEKFQGQLGLLRNLFTTALYEDRLSQWFTPEGFRSLFSLVGTNGQGIGTSSLSQWVHACDALELPRQQREQLDAFIDQLYKDIDKETGDFLNCEGSGLFLLQSSCNHSCVPNAEASFPENNFLLHLTALGDIGPGEEICISYLDCCQRDRSRHSRHKILRENYLFICSCQKCLSQMDDADMTSEDEEEVEGEGETEGEDMEDEMTDV</sequence>